<feature type="chain" id="PRO_0000365236" description="Probable DNA ligase">
    <location>
        <begin position="1"/>
        <end position="509"/>
    </location>
</feature>
<feature type="active site" description="N6-AMP-lysine intermediate" evidence="1">
    <location>
        <position position="220"/>
    </location>
</feature>
<feature type="binding site" evidence="1">
    <location>
        <position position="218"/>
    </location>
    <ligand>
        <name>ATP</name>
        <dbReference type="ChEBI" id="CHEBI:30616"/>
    </ligand>
</feature>
<feature type="binding site" evidence="1">
    <location>
        <position position="225"/>
    </location>
    <ligand>
        <name>ATP</name>
        <dbReference type="ChEBI" id="CHEBI:30616"/>
    </ligand>
</feature>
<feature type="binding site" evidence="1">
    <location>
        <position position="240"/>
    </location>
    <ligand>
        <name>ATP</name>
        <dbReference type="ChEBI" id="CHEBI:30616"/>
    </ligand>
</feature>
<feature type="binding site" evidence="1">
    <location>
        <position position="269"/>
    </location>
    <ligand>
        <name>ATP</name>
        <dbReference type="ChEBI" id="CHEBI:30616"/>
    </ligand>
</feature>
<feature type="binding site" evidence="1">
    <location>
        <position position="302"/>
    </location>
    <ligand>
        <name>ATP</name>
        <dbReference type="ChEBI" id="CHEBI:30616"/>
    </ligand>
</feature>
<feature type="binding site" evidence="1">
    <location>
        <position position="374"/>
    </location>
    <ligand>
        <name>ATP</name>
        <dbReference type="ChEBI" id="CHEBI:30616"/>
    </ligand>
</feature>
<feature type="binding site" evidence="1">
    <location>
        <position position="380"/>
    </location>
    <ligand>
        <name>ATP</name>
        <dbReference type="ChEBI" id="CHEBI:30616"/>
    </ligand>
</feature>
<protein>
    <recommendedName>
        <fullName evidence="1">Probable DNA ligase</fullName>
        <ecNumber evidence="1">6.5.1.1</ecNumber>
    </recommendedName>
    <alternativeName>
        <fullName evidence="1">Polydeoxyribonucleotide synthase [ATP]</fullName>
    </alternativeName>
</protein>
<comment type="function">
    <text evidence="1">DNA ligase that seals nicks in double-stranded DNA during DNA replication, DNA recombination and DNA repair.</text>
</comment>
<comment type="catalytic activity">
    <reaction evidence="1">
        <text>ATP + (deoxyribonucleotide)n-3'-hydroxyl + 5'-phospho-(deoxyribonucleotide)m = (deoxyribonucleotide)n+m + AMP + diphosphate.</text>
        <dbReference type="EC" id="6.5.1.1"/>
    </reaction>
</comment>
<comment type="cofactor">
    <cofactor evidence="1">
        <name>Mg(2+)</name>
        <dbReference type="ChEBI" id="CHEBI:18420"/>
    </cofactor>
</comment>
<comment type="similarity">
    <text evidence="1">Belongs to the ATP-dependent DNA ligase family.</text>
</comment>
<organism>
    <name type="scientific">Nocardioides sp. (strain ATCC BAA-499 / JS614)</name>
    <dbReference type="NCBI Taxonomy" id="196162"/>
    <lineage>
        <taxon>Bacteria</taxon>
        <taxon>Bacillati</taxon>
        <taxon>Actinomycetota</taxon>
        <taxon>Actinomycetes</taxon>
        <taxon>Propionibacteriales</taxon>
        <taxon>Nocardioidaceae</taxon>
        <taxon>Nocardioides</taxon>
    </lineage>
</organism>
<reference key="1">
    <citation type="submission" date="2006-12" db="EMBL/GenBank/DDBJ databases">
        <title>Complete sequence of chromosome 1 of Nocardioides sp. JS614.</title>
        <authorList>
            <person name="Copeland A."/>
            <person name="Lucas S."/>
            <person name="Lapidus A."/>
            <person name="Barry K."/>
            <person name="Detter J.C."/>
            <person name="Glavina del Rio T."/>
            <person name="Hammon N."/>
            <person name="Israni S."/>
            <person name="Dalin E."/>
            <person name="Tice H."/>
            <person name="Pitluck S."/>
            <person name="Thompson L.S."/>
            <person name="Brettin T."/>
            <person name="Bruce D."/>
            <person name="Han C."/>
            <person name="Tapia R."/>
            <person name="Schmutz J."/>
            <person name="Larimer F."/>
            <person name="Land M."/>
            <person name="Hauser L."/>
            <person name="Kyrpides N."/>
            <person name="Kim E."/>
            <person name="Mattes T."/>
            <person name="Gossett J."/>
            <person name="Richardson P."/>
        </authorList>
    </citation>
    <scope>NUCLEOTIDE SEQUENCE [LARGE SCALE GENOMIC DNA]</scope>
    <source>
        <strain>ATCC BAA-499 / JS614</strain>
    </source>
</reference>
<gene>
    <name evidence="1" type="primary">lig</name>
    <name type="ordered locus">Noca_2845</name>
</gene>
<proteinExistence type="inferred from homology"/>
<sequence length="509" mass="53371">MNGAVLIADVVATSAAITATRSRKAKVAAIADLLARADPRRSGADELETVTAYVGGALRQRRTGLGWRGLTKLPAPAPGPTLSVLEVHEAFERIAAPAGAGSQAARAAAVADLFGRATAEEQQWLRGVVTGEVRQGALDSLVQEGLAAAAGVPLPEVRRAAMLAGSTVAVAAAAFEGVAALGAVGLQVGRPVLPMLASSAPDLAAALARAGGDEVAVDTKLDGIRIQVHRSGPDVVVATRSLEDITARLPEVVEVARALPADSFVLDGEALALAEDGRPRPFQETAARTAMGAGVEVTPYFFDVLHLDGADLLDVSAAERAAVLERLVPAEHRVPRVVTADLGVAEEFLAGALRSGHEGVVVKSLAAPYEAGRRGASWVKVKPVHTLDLVVLAVEWGSGRRQGWLSNIHLGARDPATGGLVMLGKTFKGMTDEVLAWQTERFLELETSRSAHVVHVRPEQVVEIAFDGVQRSTRYPGGVALRFARVLRYRDDKPVAEIDTVDTVRSFLG</sequence>
<keyword id="KW-0067">ATP-binding</keyword>
<keyword id="KW-0131">Cell cycle</keyword>
<keyword id="KW-0132">Cell division</keyword>
<keyword id="KW-0227">DNA damage</keyword>
<keyword id="KW-0233">DNA recombination</keyword>
<keyword id="KW-0234">DNA repair</keyword>
<keyword id="KW-0235">DNA replication</keyword>
<keyword id="KW-0436">Ligase</keyword>
<keyword id="KW-0460">Magnesium</keyword>
<keyword id="KW-0479">Metal-binding</keyword>
<keyword id="KW-0547">Nucleotide-binding</keyword>
<keyword id="KW-1185">Reference proteome</keyword>
<accession>A1SKL2</accession>
<dbReference type="EC" id="6.5.1.1" evidence="1"/>
<dbReference type="EMBL" id="CP000509">
    <property type="protein sequence ID" value="ABL82347.1"/>
    <property type="molecule type" value="Genomic_DNA"/>
</dbReference>
<dbReference type="SMR" id="A1SKL2"/>
<dbReference type="STRING" id="196162.Noca_2845"/>
<dbReference type="KEGG" id="nca:Noca_2845"/>
<dbReference type="eggNOG" id="COG1793">
    <property type="taxonomic scope" value="Bacteria"/>
</dbReference>
<dbReference type="HOGENOM" id="CLU_005138_6_1_11"/>
<dbReference type="OrthoDB" id="3733803at2"/>
<dbReference type="Proteomes" id="UP000000640">
    <property type="component" value="Chromosome"/>
</dbReference>
<dbReference type="GO" id="GO:0005524">
    <property type="term" value="F:ATP binding"/>
    <property type="evidence" value="ECO:0007669"/>
    <property type="project" value="UniProtKB-UniRule"/>
</dbReference>
<dbReference type="GO" id="GO:0003677">
    <property type="term" value="F:DNA binding"/>
    <property type="evidence" value="ECO:0007669"/>
    <property type="project" value="InterPro"/>
</dbReference>
<dbReference type="GO" id="GO:0003910">
    <property type="term" value="F:DNA ligase (ATP) activity"/>
    <property type="evidence" value="ECO:0007669"/>
    <property type="project" value="UniProtKB-UniRule"/>
</dbReference>
<dbReference type="GO" id="GO:0046872">
    <property type="term" value="F:metal ion binding"/>
    <property type="evidence" value="ECO:0007669"/>
    <property type="project" value="UniProtKB-KW"/>
</dbReference>
<dbReference type="GO" id="GO:0051301">
    <property type="term" value="P:cell division"/>
    <property type="evidence" value="ECO:0007669"/>
    <property type="project" value="UniProtKB-KW"/>
</dbReference>
<dbReference type="GO" id="GO:0071897">
    <property type="term" value="P:DNA biosynthetic process"/>
    <property type="evidence" value="ECO:0007669"/>
    <property type="project" value="InterPro"/>
</dbReference>
<dbReference type="GO" id="GO:0006310">
    <property type="term" value="P:DNA recombination"/>
    <property type="evidence" value="ECO:0007669"/>
    <property type="project" value="UniProtKB-UniRule"/>
</dbReference>
<dbReference type="GO" id="GO:0006281">
    <property type="term" value="P:DNA repair"/>
    <property type="evidence" value="ECO:0007669"/>
    <property type="project" value="UniProtKB-UniRule"/>
</dbReference>
<dbReference type="GO" id="GO:0006260">
    <property type="term" value="P:DNA replication"/>
    <property type="evidence" value="ECO:0007669"/>
    <property type="project" value="UniProtKB-UniRule"/>
</dbReference>
<dbReference type="CDD" id="cd07901">
    <property type="entry name" value="Adenylation_DNA_ligase_Arch_LigB"/>
    <property type="match status" value="1"/>
</dbReference>
<dbReference type="CDD" id="cd07972">
    <property type="entry name" value="OBF_DNA_ligase_Arch_LigB"/>
    <property type="match status" value="1"/>
</dbReference>
<dbReference type="FunFam" id="2.40.50.140:FF:000163">
    <property type="entry name" value="Probable DNA ligase"/>
    <property type="match status" value="1"/>
</dbReference>
<dbReference type="Gene3D" id="1.10.3260.10">
    <property type="entry name" value="DNA ligase, ATP-dependent, N-terminal domain"/>
    <property type="match status" value="1"/>
</dbReference>
<dbReference type="Gene3D" id="3.30.470.30">
    <property type="entry name" value="DNA ligase/mRNA capping enzyme"/>
    <property type="match status" value="1"/>
</dbReference>
<dbReference type="Gene3D" id="2.40.50.140">
    <property type="entry name" value="Nucleic acid-binding proteins"/>
    <property type="match status" value="1"/>
</dbReference>
<dbReference type="HAMAP" id="MF_00407">
    <property type="entry name" value="DNA_ligase"/>
    <property type="match status" value="1"/>
</dbReference>
<dbReference type="InterPro" id="IPR050191">
    <property type="entry name" value="ATP-dep_DNA_ligase"/>
</dbReference>
<dbReference type="InterPro" id="IPR022865">
    <property type="entry name" value="DNA_ligae_ATP-dep_bac/arc"/>
</dbReference>
<dbReference type="InterPro" id="IPR000977">
    <property type="entry name" value="DNA_ligase_ATP-dep"/>
</dbReference>
<dbReference type="InterPro" id="IPR012309">
    <property type="entry name" value="DNA_ligase_ATP-dep_C"/>
</dbReference>
<dbReference type="InterPro" id="IPR012310">
    <property type="entry name" value="DNA_ligase_ATP-dep_cent"/>
</dbReference>
<dbReference type="InterPro" id="IPR016059">
    <property type="entry name" value="DNA_ligase_ATP-dep_CS"/>
</dbReference>
<dbReference type="InterPro" id="IPR012308">
    <property type="entry name" value="DNA_ligase_ATP-dep_N"/>
</dbReference>
<dbReference type="InterPro" id="IPR036599">
    <property type="entry name" value="DNA_ligase_N_sf"/>
</dbReference>
<dbReference type="InterPro" id="IPR012340">
    <property type="entry name" value="NA-bd_OB-fold"/>
</dbReference>
<dbReference type="NCBIfam" id="TIGR00574">
    <property type="entry name" value="dnl1"/>
    <property type="match status" value="1"/>
</dbReference>
<dbReference type="NCBIfam" id="NF002868">
    <property type="entry name" value="PRK03180.1"/>
    <property type="match status" value="1"/>
</dbReference>
<dbReference type="PANTHER" id="PTHR45674">
    <property type="entry name" value="DNA LIGASE 1/3 FAMILY MEMBER"/>
    <property type="match status" value="1"/>
</dbReference>
<dbReference type="PANTHER" id="PTHR45674:SF13">
    <property type="entry name" value="DNA LIGASE-RELATED"/>
    <property type="match status" value="1"/>
</dbReference>
<dbReference type="Pfam" id="PF04679">
    <property type="entry name" value="DNA_ligase_A_C"/>
    <property type="match status" value="1"/>
</dbReference>
<dbReference type="Pfam" id="PF01068">
    <property type="entry name" value="DNA_ligase_A_M"/>
    <property type="match status" value="1"/>
</dbReference>
<dbReference type="Pfam" id="PF04675">
    <property type="entry name" value="DNA_ligase_A_N"/>
    <property type="match status" value="1"/>
</dbReference>
<dbReference type="SUPFAM" id="SSF117018">
    <property type="entry name" value="ATP-dependent DNA ligase DNA-binding domain"/>
    <property type="match status" value="1"/>
</dbReference>
<dbReference type="SUPFAM" id="SSF56091">
    <property type="entry name" value="DNA ligase/mRNA capping enzyme, catalytic domain"/>
    <property type="match status" value="1"/>
</dbReference>
<dbReference type="SUPFAM" id="SSF50249">
    <property type="entry name" value="Nucleic acid-binding proteins"/>
    <property type="match status" value="1"/>
</dbReference>
<dbReference type="PROSITE" id="PS00697">
    <property type="entry name" value="DNA_LIGASE_A1"/>
    <property type="match status" value="1"/>
</dbReference>
<dbReference type="PROSITE" id="PS00333">
    <property type="entry name" value="DNA_LIGASE_A2"/>
    <property type="match status" value="1"/>
</dbReference>
<dbReference type="PROSITE" id="PS50160">
    <property type="entry name" value="DNA_LIGASE_A3"/>
    <property type="match status" value="1"/>
</dbReference>
<name>DNLI_NOCSJ</name>
<evidence type="ECO:0000255" key="1">
    <source>
        <dbReference type="HAMAP-Rule" id="MF_00407"/>
    </source>
</evidence>